<evidence type="ECO:0000255" key="1">
    <source>
        <dbReference type="HAMAP-Rule" id="MF_01021"/>
    </source>
</evidence>
<protein>
    <recommendedName>
        <fullName evidence="1">Phosphoribosyl-AMP cyclohydrolase</fullName>
        <shortName evidence="1">PRA-CH</shortName>
        <ecNumber evidence="1">3.5.4.19</ecNumber>
    </recommendedName>
</protein>
<gene>
    <name evidence="1" type="primary">hisI</name>
    <name type="ordered locus">BMA10229_A1795</name>
</gene>
<organism>
    <name type="scientific">Burkholderia mallei (strain NCTC 10229)</name>
    <dbReference type="NCBI Taxonomy" id="412022"/>
    <lineage>
        <taxon>Bacteria</taxon>
        <taxon>Pseudomonadati</taxon>
        <taxon>Pseudomonadota</taxon>
        <taxon>Betaproteobacteria</taxon>
        <taxon>Burkholderiales</taxon>
        <taxon>Burkholderiaceae</taxon>
        <taxon>Burkholderia</taxon>
        <taxon>pseudomallei group</taxon>
    </lineage>
</organism>
<dbReference type="EC" id="3.5.4.19" evidence="1"/>
<dbReference type="EMBL" id="CP000546">
    <property type="protein sequence ID" value="ABN01112.1"/>
    <property type="molecule type" value="Genomic_DNA"/>
</dbReference>
<dbReference type="RefSeq" id="WP_004201279.1">
    <property type="nucleotide sequence ID" value="NC_008836.1"/>
</dbReference>
<dbReference type="SMR" id="A2S755"/>
<dbReference type="GeneID" id="93061749"/>
<dbReference type="KEGG" id="bml:BMA10229_A1795"/>
<dbReference type="HOGENOM" id="CLU_048577_5_0_4"/>
<dbReference type="UniPathway" id="UPA00031">
    <property type="reaction ID" value="UER00008"/>
</dbReference>
<dbReference type="Proteomes" id="UP000002283">
    <property type="component" value="Chromosome I"/>
</dbReference>
<dbReference type="GO" id="GO:0005737">
    <property type="term" value="C:cytoplasm"/>
    <property type="evidence" value="ECO:0007669"/>
    <property type="project" value="UniProtKB-SubCell"/>
</dbReference>
<dbReference type="GO" id="GO:0000287">
    <property type="term" value="F:magnesium ion binding"/>
    <property type="evidence" value="ECO:0007669"/>
    <property type="project" value="UniProtKB-UniRule"/>
</dbReference>
<dbReference type="GO" id="GO:0004635">
    <property type="term" value="F:phosphoribosyl-AMP cyclohydrolase activity"/>
    <property type="evidence" value="ECO:0007669"/>
    <property type="project" value="UniProtKB-UniRule"/>
</dbReference>
<dbReference type="GO" id="GO:0008270">
    <property type="term" value="F:zinc ion binding"/>
    <property type="evidence" value="ECO:0007669"/>
    <property type="project" value="UniProtKB-UniRule"/>
</dbReference>
<dbReference type="GO" id="GO:0000105">
    <property type="term" value="P:L-histidine biosynthetic process"/>
    <property type="evidence" value="ECO:0007669"/>
    <property type="project" value="UniProtKB-UniRule"/>
</dbReference>
<dbReference type="FunFam" id="3.10.20.810:FF:000001">
    <property type="entry name" value="Histidine biosynthesis bifunctional protein HisIE"/>
    <property type="match status" value="1"/>
</dbReference>
<dbReference type="Gene3D" id="3.10.20.810">
    <property type="entry name" value="Phosphoribosyl-AMP cyclohydrolase"/>
    <property type="match status" value="1"/>
</dbReference>
<dbReference type="HAMAP" id="MF_01021">
    <property type="entry name" value="HisI"/>
    <property type="match status" value="1"/>
</dbReference>
<dbReference type="InterPro" id="IPR026660">
    <property type="entry name" value="PRA-CH"/>
</dbReference>
<dbReference type="InterPro" id="IPR002496">
    <property type="entry name" value="PRib_AMP_CycHydrolase_dom"/>
</dbReference>
<dbReference type="InterPro" id="IPR038019">
    <property type="entry name" value="PRib_AMP_CycHydrolase_sf"/>
</dbReference>
<dbReference type="NCBIfam" id="NF000768">
    <property type="entry name" value="PRK00051.1"/>
    <property type="match status" value="1"/>
</dbReference>
<dbReference type="PANTHER" id="PTHR42945">
    <property type="entry name" value="HISTIDINE BIOSYNTHESIS BIFUNCTIONAL PROTEIN"/>
    <property type="match status" value="1"/>
</dbReference>
<dbReference type="PANTHER" id="PTHR42945:SF1">
    <property type="entry name" value="HISTIDINE BIOSYNTHESIS BIFUNCTIONAL PROTEIN HIS7"/>
    <property type="match status" value="1"/>
</dbReference>
<dbReference type="Pfam" id="PF01502">
    <property type="entry name" value="PRA-CH"/>
    <property type="match status" value="1"/>
</dbReference>
<dbReference type="SUPFAM" id="SSF141734">
    <property type="entry name" value="HisI-like"/>
    <property type="match status" value="1"/>
</dbReference>
<accession>A2S755</accession>
<reference key="1">
    <citation type="journal article" date="2010" name="Genome Biol. Evol.">
        <title>Continuing evolution of Burkholderia mallei through genome reduction and large-scale rearrangements.</title>
        <authorList>
            <person name="Losada L."/>
            <person name="Ronning C.M."/>
            <person name="DeShazer D."/>
            <person name="Woods D."/>
            <person name="Fedorova N."/>
            <person name="Kim H.S."/>
            <person name="Shabalina S.A."/>
            <person name="Pearson T.R."/>
            <person name="Brinkac L."/>
            <person name="Tan P."/>
            <person name="Nandi T."/>
            <person name="Crabtree J."/>
            <person name="Badger J."/>
            <person name="Beckstrom-Sternberg S."/>
            <person name="Saqib M."/>
            <person name="Schutzer S.E."/>
            <person name="Keim P."/>
            <person name="Nierman W.C."/>
        </authorList>
    </citation>
    <scope>NUCLEOTIDE SEQUENCE [LARGE SCALE GENOMIC DNA]</scope>
    <source>
        <strain>NCTC 10229</strain>
    </source>
</reference>
<comment type="function">
    <text evidence="1">Catalyzes the hydrolysis of the adenine ring of phosphoribosyl-AMP.</text>
</comment>
<comment type="catalytic activity">
    <reaction evidence="1">
        <text>1-(5-phospho-beta-D-ribosyl)-5'-AMP + H2O = 1-(5-phospho-beta-D-ribosyl)-5-[(5-phospho-beta-D-ribosylamino)methylideneamino]imidazole-4-carboxamide</text>
        <dbReference type="Rhea" id="RHEA:20049"/>
        <dbReference type="ChEBI" id="CHEBI:15377"/>
        <dbReference type="ChEBI" id="CHEBI:58435"/>
        <dbReference type="ChEBI" id="CHEBI:59457"/>
        <dbReference type="EC" id="3.5.4.19"/>
    </reaction>
</comment>
<comment type="cofactor">
    <cofactor evidence="1">
        <name>Mg(2+)</name>
        <dbReference type="ChEBI" id="CHEBI:18420"/>
    </cofactor>
    <text evidence="1">Binds 1 Mg(2+) ion per subunit.</text>
</comment>
<comment type="cofactor">
    <cofactor evidence="1">
        <name>Zn(2+)</name>
        <dbReference type="ChEBI" id="CHEBI:29105"/>
    </cofactor>
    <text evidence="1">Binds 1 zinc ion per subunit.</text>
</comment>
<comment type="pathway">
    <text evidence="1">Amino-acid biosynthesis; L-histidine biosynthesis; L-histidine from 5-phospho-alpha-D-ribose 1-diphosphate: step 3/9.</text>
</comment>
<comment type="subunit">
    <text evidence="1">Homodimer.</text>
</comment>
<comment type="subcellular location">
    <subcellularLocation>
        <location evidence="1">Cytoplasm</location>
    </subcellularLocation>
</comment>
<comment type="similarity">
    <text evidence="1">Belongs to the PRA-CH family.</text>
</comment>
<sequence>MNAEAKPGDWLGKVRWDANGLVPVIAQDAATNDVLMFAWMNRDALAKTIELKRAVYYSRSRQRLWFKGEESGHVQHVHEVRLDCDEDVVLLKVEQVEGIACHTGRRSCFFQKFEGTVDDGEWVAVDPVLKDPEHIYK</sequence>
<name>HIS3_BURM9</name>
<proteinExistence type="inferred from homology"/>
<feature type="chain" id="PRO_1000063395" description="Phosphoribosyl-AMP cyclohydrolase">
    <location>
        <begin position="1"/>
        <end position="137"/>
    </location>
</feature>
<feature type="binding site" evidence="1">
    <location>
        <position position="83"/>
    </location>
    <ligand>
        <name>Mg(2+)</name>
        <dbReference type="ChEBI" id="CHEBI:18420"/>
    </ligand>
</feature>
<feature type="binding site" evidence="1">
    <location>
        <position position="84"/>
    </location>
    <ligand>
        <name>Zn(2+)</name>
        <dbReference type="ChEBI" id="CHEBI:29105"/>
        <note>ligand shared between dimeric partners</note>
    </ligand>
</feature>
<feature type="binding site" evidence="1">
    <location>
        <position position="85"/>
    </location>
    <ligand>
        <name>Mg(2+)</name>
        <dbReference type="ChEBI" id="CHEBI:18420"/>
    </ligand>
</feature>
<feature type="binding site" evidence="1">
    <location>
        <position position="87"/>
    </location>
    <ligand>
        <name>Mg(2+)</name>
        <dbReference type="ChEBI" id="CHEBI:18420"/>
    </ligand>
</feature>
<feature type="binding site" evidence="1">
    <location>
        <position position="101"/>
    </location>
    <ligand>
        <name>Zn(2+)</name>
        <dbReference type="ChEBI" id="CHEBI:29105"/>
        <note>ligand shared between dimeric partners</note>
    </ligand>
</feature>
<feature type="binding site" evidence="1">
    <location>
        <position position="108"/>
    </location>
    <ligand>
        <name>Zn(2+)</name>
        <dbReference type="ChEBI" id="CHEBI:29105"/>
        <note>ligand shared between dimeric partners</note>
    </ligand>
</feature>
<keyword id="KW-0028">Amino-acid biosynthesis</keyword>
<keyword id="KW-0963">Cytoplasm</keyword>
<keyword id="KW-0368">Histidine biosynthesis</keyword>
<keyword id="KW-0378">Hydrolase</keyword>
<keyword id="KW-0460">Magnesium</keyword>
<keyword id="KW-0479">Metal-binding</keyword>
<keyword id="KW-0862">Zinc</keyword>